<organism>
    <name type="scientific">Trichormus variabilis (strain ATCC 29413 / PCC 7937)</name>
    <name type="common">Anabaena variabilis</name>
    <dbReference type="NCBI Taxonomy" id="240292"/>
    <lineage>
        <taxon>Bacteria</taxon>
        <taxon>Bacillati</taxon>
        <taxon>Cyanobacteriota</taxon>
        <taxon>Cyanophyceae</taxon>
        <taxon>Nostocales</taxon>
        <taxon>Nostocaceae</taxon>
        <taxon>Trichormus</taxon>
    </lineage>
</organism>
<sequence>MAFNSQPIEGWHGKLDLVYADRSNSTQLIYNHQQAPLKVQRPFYPEGEKVCHSVILHTAGGVVGGDRLSYNLHLQPNAQALITTAAAGKIYRSEGLQARQTIDIKIDAGACLEWLPQETILFNGAIYRQDLRVELATGANFLGWEITRFGRSARGEKFYQGEWRSHTEIWRQGVPLWIDRQWLPGNEAVFHSPHGLAGQPIVGSLVWLGSAVSTEIIAKARNLGNTQGEKGVTSLENGFLCRYRGASTSEVRNWFTDVWQLLRVEFFSRSKCTPRVWQT</sequence>
<evidence type="ECO:0000255" key="1">
    <source>
        <dbReference type="HAMAP-Rule" id="MF_01384"/>
    </source>
</evidence>
<reference key="1">
    <citation type="journal article" date="2014" name="Stand. Genomic Sci.">
        <title>Complete genome sequence of Anabaena variabilis ATCC 29413.</title>
        <authorList>
            <person name="Thiel T."/>
            <person name="Pratte B.S."/>
            <person name="Zhong J."/>
            <person name="Goodwin L."/>
            <person name="Copeland A."/>
            <person name="Lucas S."/>
            <person name="Han C."/>
            <person name="Pitluck S."/>
            <person name="Land M.L."/>
            <person name="Kyrpides N.C."/>
            <person name="Woyke T."/>
        </authorList>
    </citation>
    <scope>NUCLEOTIDE SEQUENCE [LARGE SCALE GENOMIC DNA]</scope>
    <source>
        <strain>ATCC 29413 / PCC 7937</strain>
    </source>
</reference>
<dbReference type="EMBL" id="CP000117">
    <property type="protein sequence ID" value="ABA23228.1"/>
    <property type="molecule type" value="Genomic_DNA"/>
</dbReference>
<dbReference type="SMR" id="Q3M708"/>
<dbReference type="STRING" id="240292.Ava_3622"/>
<dbReference type="KEGG" id="ava:Ava_3622"/>
<dbReference type="eggNOG" id="COG0829">
    <property type="taxonomic scope" value="Bacteria"/>
</dbReference>
<dbReference type="HOGENOM" id="CLU_056339_0_0_3"/>
<dbReference type="Proteomes" id="UP000002533">
    <property type="component" value="Chromosome"/>
</dbReference>
<dbReference type="GO" id="GO:0005737">
    <property type="term" value="C:cytoplasm"/>
    <property type="evidence" value="ECO:0007669"/>
    <property type="project" value="UniProtKB-SubCell"/>
</dbReference>
<dbReference type="GO" id="GO:0016151">
    <property type="term" value="F:nickel cation binding"/>
    <property type="evidence" value="ECO:0007669"/>
    <property type="project" value="UniProtKB-UniRule"/>
</dbReference>
<dbReference type="HAMAP" id="MF_01384">
    <property type="entry name" value="UreD"/>
    <property type="match status" value="1"/>
</dbReference>
<dbReference type="InterPro" id="IPR002669">
    <property type="entry name" value="UreD"/>
</dbReference>
<dbReference type="PANTHER" id="PTHR33643">
    <property type="entry name" value="UREASE ACCESSORY PROTEIN D"/>
    <property type="match status" value="1"/>
</dbReference>
<dbReference type="PANTHER" id="PTHR33643:SF1">
    <property type="entry name" value="UREASE ACCESSORY PROTEIN D"/>
    <property type="match status" value="1"/>
</dbReference>
<dbReference type="Pfam" id="PF01774">
    <property type="entry name" value="UreD"/>
    <property type="match status" value="1"/>
</dbReference>
<feature type="chain" id="PRO_0000340407" description="Urease accessory protein UreD">
    <location>
        <begin position="1"/>
        <end position="279"/>
    </location>
</feature>
<keyword id="KW-0143">Chaperone</keyword>
<keyword id="KW-0963">Cytoplasm</keyword>
<keyword id="KW-0996">Nickel insertion</keyword>
<name>URED_TRIV2</name>
<protein>
    <recommendedName>
        <fullName evidence="1">Urease accessory protein UreD</fullName>
    </recommendedName>
</protein>
<gene>
    <name evidence="1" type="primary">ureD</name>
    <name type="ordered locus">Ava_3622</name>
</gene>
<accession>Q3M708</accession>
<comment type="function">
    <text evidence="1">Required for maturation of urease via the functional incorporation of the urease nickel metallocenter.</text>
</comment>
<comment type="subunit">
    <text evidence="1">UreD, UreF and UreG form a complex that acts as a GTP-hydrolysis-dependent molecular chaperone, activating the urease apoprotein by helping to assemble the nickel containing metallocenter of UreC. The UreE protein probably delivers the nickel.</text>
</comment>
<comment type="subcellular location">
    <subcellularLocation>
        <location evidence="1">Cytoplasm</location>
    </subcellularLocation>
</comment>
<comment type="similarity">
    <text evidence="1">Belongs to the UreD family.</text>
</comment>
<proteinExistence type="inferred from homology"/>